<dbReference type="GlyCosmos" id="P0CV44">
    <property type="glycosylation" value="1 site, No reported glycans"/>
</dbReference>
<dbReference type="GO" id="GO:0005576">
    <property type="term" value="C:extracellular region"/>
    <property type="evidence" value="ECO:0007669"/>
    <property type="project" value="UniProtKB-SubCell"/>
</dbReference>
<dbReference type="GO" id="GO:0042025">
    <property type="term" value="C:host cell nucleus"/>
    <property type="evidence" value="ECO:0007669"/>
    <property type="project" value="UniProtKB-SubCell"/>
</dbReference>
<feature type="signal peptide" evidence="1">
    <location>
        <begin position="1"/>
        <end position="19"/>
    </location>
</feature>
<feature type="chain" id="PRO_0000447953" description="Secreted RxLR effector protein 111">
    <location>
        <begin position="20"/>
        <end position="451"/>
    </location>
</feature>
<feature type="region of interest" description="Disordered" evidence="3">
    <location>
        <begin position="175"/>
        <end position="194"/>
    </location>
</feature>
<feature type="region of interest" description="Disordered" evidence="3">
    <location>
        <begin position="404"/>
        <end position="451"/>
    </location>
</feature>
<feature type="short sequence motif" description="RxLR-dEER" evidence="7">
    <location>
        <begin position="48"/>
        <end position="69"/>
    </location>
</feature>
<feature type="compositionally biased region" description="Polar residues" evidence="3">
    <location>
        <begin position="175"/>
        <end position="184"/>
    </location>
</feature>
<feature type="compositionally biased region" description="Polar residues" evidence="3">
    <location>
        <begin position="413"/>
        <end position="426"/>
    </location>
</feature>
<feature type="compositionally biased region" description="Basic and acidic residues" evidence="3">
    <location>
        <begin position="437"/>
        <end position="451"/>
    </location>
</feature>
<feature type="glycosylation site" description="N-linked (GlcNAc...) asparagine" evidence="2">
    <location>
        <position position="66"/>
    </location>
</feature>
<organism>
    <name type="scientific">Plasmopara viticola</name>
    <name type="common">Downy mildew of grapevine</name>
    <name type="synonym">Botrytis viticola</name>
    <dbReference type="NCBI Taxonomy" id="143451"/>
    <lineage>
        <taxon>Eukaryota</taxon>
        <taxon>Sar</taxon>
        <taxon>Stramenopiles</taxon>
        <taxon>Oomycota</taxon>
        <taxon>Peronosporales</taxon>
        <taxon>Peronosporaceae</taxon>
        <taxon>Plasmopara</taxon>
    </lineage>
</organism>
<evidence type="ECO:0000255" key="1"/>
<evidence type="ECO:0000255" key="2">
    <source>
        <dbReference type="PROSITE-ProRule" id="PRU00498"/>
    </source>
</evidence>
<evidence type="ECO:0000256" key="3">
    <source>
        <dbReference type="SAM" id="MobiDB-lite"/>
    </source>
</evidence>
<evidence type="ECO:0000269" key="4">
    <source>
    </source>
</evidence>
<evidence type="ECO:0000303" key="5">
    <source>
    </source>
</evidence>
<evidence type="ECO:0000305" key="6"/>
<evidence type="ECO:0000305" key="7">
    <source>
    </source>
</evidence>
<accession>P0CV44</accession>
<keyword id="KW-0325">Glycoprotein</keyword>
<keyword id="KW-1048">Host nucleus</keyword>
<keyword id="KW-0964">Secreted</keyword>
<keyword id="KW-0732">Signal</keyword>
<keyword id="KW-0843">Virulence</keyword>
<sequence>MRGTLATALLLVASCRIAAESNQINPQQASHHVGTTLNKLFTKSSPRRFLRDNREQRVALALTAANESRTIENAVTSAVHGITDASTTTAATRDAARDILNQHAFPKEGIRPQFDLNLPPSETSALLTGASNIPQRNHAFSSITSGIAVSSSRTSNQRTAKTQANLDMSHQGTVRKTLSKTQFKNPAASKSTKRRKKARIIPPFVVNKVDTLYREHLTAKSLEFDPTIKETEAMLKLYVESTVDPLPVSTVHFNHFRYFKDQDLTLLKEKLGTTLESALSTLAALNLPPGMLKAIERPFVWYASLARWRAMYCDFFEFLNANSNKIATSLPNVEFFGGETSSTVRDQLLATLKEEMKTRTKTRRNGKIMNDLKVVLAKYNVEEEIKAAIRGLGEQFLKRDHEIIPLQRHSRRSPASQSRSNNQRTGLTPYGLQIPGPERDSFRHIESNKHA</sequence>
<name>RL111_PLAVT</name>
<protein>
    <recommendedName>
        <fullName evidence="5">Secreted RxLR effector protein 111</fullName>
    </recommendedName>
</protein>
<proteinExistence type="evidence at transcript level"/>
<comment type="function">
    <text evidence="4">Secreted effector that acts as an elicitor that induces cell death in host plant cells.</text>
</comment>
<comment type="subcellular location">
    <subcellularLocation>
        <location evidence="4">Secreted</location>
    </subcellularLocation>
    <subcellularLocation>
        <location evidence="4">Host nucleus</location>
    </subcellularLocation>
    <text evidence="4">Localizes to speckle-like structures within the nucleus.</text>
</comment>
<comment type="domain">
    <text evidence="7">The RxLR-dEER motif acts to carry the protein into the host cell cytoplasm through binding to cell surface phosphatidylinositol-3-phosphate.</text>
</comment>
<comment type="similarity">
    <text evidence="6">Belongs to the RxLR effector family.</text>
</comment>
<gene>
    <name evidence="5" type="primary">RXLR111</name>
</gene>
<reference key="1">
    <citation type="journal article" date="2018" name="Front. Plant Sci.">
        <title>In planta functional analysis and subcellular localization of the oomycete pathogen Plasmopara viticola candidate RXLR effector repertoire.</title>
        <authorList>
            <person name="Liu Y."/>
            <person name="Lan X."/>
            <person name="Song S."/>
            <person name="Yin L."/>
            <person name="Dry I.B."/>
            <person name="Qu J."/>
            <person name="Xiang J."/>
            <person name="Lu J."/>
        </authorList>
    </citation>
    <scope>NUCLEOTIDE SEQUENCE [MRNA]</scope>
    <scope>DOMAIN</scope>
    <scope>FUNCTION</scope>
    <scope>SUBCELLULAR LOCATION</scope>
</reference>